<protein>
    <recommendedName>
        <fullName>Mitochondrial 15S rRNA processing factor CCM1</fullName>
    </recommendedName>
</protein>
<proteinExistence type="inferred from homology"/>
<keyword id="KW-0496">Mitochondrion</keyword>
<keyword id="KW-0507">mRNA processing</keyword>
<keyword id="KW-0508">mRNA splicing</keyword>
<keyword id="KW-1185">Reference proteome</keyword>
<keyword id="KW-0677">Repeat</keyword>
<keyword id="KW-0809">Transit peptide</keyword>
<sequence>MMLRLSVKKRCMSRTIPRISGLQGSIYSSRNIFVVRSQKGKPTLRKSKGSNDGGAVNNKEKLSEWVDSDFERKMKQQEVEYERRLKELKSLTASVARIIKKKEDIEKLQEIPMPSEVNRDAEKIYGSLEVGKEKLASLPENSPSLSGIEKQPEPFNASNHSLITPAIDMPESITKRLGLAIKFLVSKTNINWTMVLQQLKEGGGFQGLPERDIRMFIYSIPKEQISHLIPVLEQLLEEGNVKKSSKIINVFIAGLSHGGYLSDESIAQIEQYCNHITKINKKGKLSRETYELMIQAYGKNNNLEKINMCLSEMKQNKLEPSQKTFSNILSTCVYKANDHKQAVEIFDSMKFLSQKTKPDTRAYQDIIVSYVNNDNIEKALDLYREMITEKIEINQRIMVALARGCTSRPELRFKAWDFIFDIYNNNWEPTLNTFEYMLYLSAKDGDVALSRAFYSKLNESNAITPRSFSFLLLAYSKSQVSQPGQSIELPPITFHEKGRNFRRNILSDVNLFPASAQNGIPFLPVLDLTSKEEIMAESSAMWAHTLMFNPSFVNTDCANTFLNIAAVMGRLNDFIDRYDSSTFLDRTGLSNDTRIIIEELPDSISSNTDISQTDGESVSSVQSKFDEMSITKSPLLKDVGSNIGLGNRKISRTSLSYVIALKAAARFKNYKFAQRIWSERGTFRKTSNFKDLSRSTKDALDFQFANAMVSCLTKMNLLDDALAILLSTEYQFKWTWKELRELYQAASDIDHSDACKSIRGIAKRAQINYEGKIRRKDFKRYVMERGY</sequence>
<feature type="transit peptide" description="Mitochondrion" evidence="2">
    <location>
        <begin position="1"/>
        <end position="12"/>
    </location>
</feature>
<feature type="chain" id="PRO_0000402262" description="Mitochondrial 15S rRNA processing factor CCM1" evidence="2">
    <location>
        <begin position="13"/>
        <end position="787"/>
    </location>
</feature>
<feature type="repeat" description="PPR 1" evidence="3">
    <location>
        <begin position="286"/>
        <end position="320"/>
    </location>
</feature>
<feature type="repeat" description="PPR 2" evidence="3">
    <location>
        <begin position="321"/>
        <end position="356"/>
    </location>
</feature>
<feature type="repeat" description="PPR 3" evidence="3">
    <location>
        <begin position="359"/>
        <end position="393"/>
    </location>
</feature>
<feature type="region of interest" description="Disordered" evidence="4">
    <location>
        <begin position="38"/>
        <end position="58"/>
    </location>
</feature>
<feature type="compositionally biased region" description="Basic residues" evidence="4">
    <location>
        <begin position="38"/>
        <end position="48"/>
    </location>
</feature>
<reference key="1">
    <citation type="journal article" date="2004" name="Nature">
        <title>Genome evolution in yeasts.</title>
        <authorList>
            <person name="Dujon B."/>
            <person name="Sherman D."/>
            <person name="Fischer G."/>
            <person name="Durrens P."/>
            <person name="Casaregola S."/>
            <person name="Lafontaine I."/>
            <person name="de Montigny J."/>
            <person name="Marck C."/>
            <person name="Neuveglise C."/>
            <person name="Talla E."/>
            <person name="Goffard N."/>
            <person name="Frangeul L."/>
            <person name="Aigle M."/>
            <person name="Anthouard V."/>
            <person name="Babour A."/>
            <person name="Barbe V."/>
            <person name="Barnay S."/>
            <person name="Blanchin S."/>
            <person name="Beckerich J.-M."/>
            <person name="Beyne E."/>
            <person name="Bleykasten C."/>
            <person name="Boisrame A."/>
            <person name="Boyer J."/>
            <person name="Cattolico L."/>
            <person name="Confanioleri F."/>
            <person name="de Daruvar A."/>
            <person name="Despons L."/>
            <person name="Fabre E."/>
            <person name="Fairhead C."/>
            <person name="Ferry-Dumazet H."/>
            <person name="Groppi A."/>
            <person name="Hantraye F."/>
            <person name="Hennequin C."/>
            <person name="Jauniaux N."/>
            <person name="Joyet P."/>
            <person name="Kachouri R."/>
            <person name="Kerrest A."/>
            <person name="Koszul R."/>
            <person name="Lemaire M."/>
            <person name="Lesur I."/>
            <person name="Ma L."/>
            <person name="Muller H."/>
            <person name="Nicaud J.-M."/>
            <person name="Nikolski M."/>
            <person name="Oztas S."/>
            <person name="Ozier-Kalogeropoulos O."/>
            <person name="Pellenz S."/>
            <person name="Potier S."/>
            <person name="Richard G.-F."/>
            <person name="Straub M.-L."/>
            <person name="Suleau A."/>
            <person name="Swennen D."/>
            <person name="Tekaia F."/>
            <person name="Wesolowski-Louvel M."/>
            <person name="Westhof E."/>
            <person name="Wirth B."/>
            <person name="Zeniou-Meyer M."/>
            <person name="Zivanovic Y."/>
            <person name="Bolotin-Fukuhara M."/>
            <person name="Thierry A."/>
            <person name="Bouchier C."/>
            <person name="Caudron B."/>
            <person name="Scarpelli C."/>
            <person name="Gaillardin C."/>
            <person name="Weissenbach J."/>
            <person name="Wincker P."/>
            <person name="Souciet J.-L."/>
        </authorList>
    </citation>
    <scope>NUCLEOTIDE SEQUENCE [LARGE SCALE GENOMIC DNA]</scope>
    <source>
        <strain>ATCC 36239 / CBS 767 / BCRC 21394 / JCM 1990 / NBRC 0083 / IGC 2968</strain>
    </source>
</reference>
<dbReference type="EMBL" id="CR382133">
    <property type="protein sequence ID" value="CAG84496.2"/>
    <property type="molecule type" value="Genomic_DNA"/>
</dbReference>
<dbReference type="RefSeq" id="XP_456541.2">
    <property type="nucleotide sequence ID" value="XM_456541.2"/>
</dbReference>
<dbReference type="SMR" id="Q6BZ28"/>
<dbReference type="FunCoup" id="Q6BZ28">
    <property type="interactions" value="129"/>
</dbReference>
<dbReference type="STRING" id="284592.Q6BZ28"/>
<dbReference type="GeneID" id="2899920"/>
<dbReference type="KEGG" id="dha:DEHA2A05060g"/>
<dbReference type="VEuPathDB" id="FungiDB:DEHA2A05060g"/>
<dbReference type="eggNOG" id="ENOG502QUX2">
    <property type="taxonomic scope" value="Eukaryota"/>
</dbReference>
<dbReference type="HOGENOM" id="CLU_019745_0_0_1"/>
<dbReference type="InParanoid" id="Q6BZ28"/>
<dbReference type="OMA" id="ESSAIWA"/>
<dbReference type="OrthoDB" id="185373at2759"/>
<dbReference type="Proteomes" id="UP000000599">
    <property type="component" value="Chromosome A"/>
</dbReference>
<dbReference type="GO" id="GO:0005739">
    <property type="term" value="C:mitochondrion"/>
    <property type="evidence" value="ECO:0007669"/>
    <property type="project" value="UniProtKB-SubCell"/>
</dbReference>
<dbReference type="GO" id="GO:0006397">
    <property type="term" value="P:mRNA processing"/>
    <property type="evidence" value="ECO:0007669"/>
    <property type="project" value="UniProtKB-KW"/>
</dbReference>
<dbReference type="GO" id="GO:0008380">
    <property type="term" value="P:RNA splicing"/>
    <property type="evidence" value="ECO:0007669"/>
    <property type="project" value="UniProtKB-KW"/>
</dbReference>
<dbReference type="Gene3D" id="1.25.40.10">
    <property type="entry name" value="Tetratricopeptide repeat domain"/>
    <property type="match status" value="2"/>
</dbReference>
<dbReference type="InterPro" id="IPR002885">
    <property type="entry name" value="Pentatricopeptide_rpt"/>
</dbReference>
<dbReference type="InterPro" id="IPR011990">
    <property type="entry name" value="TPR-like_helical_dom_sf"/>
</dbReference>
<dbReference type="NCBIfam" id="TIGR00756">
    <property type="entry name" value="PPR"/>
    <property type="match status" value="2"/>
</dbReference>
<dbReference type="PANTHER" id="PTHR46862">
    <property type="entry name" value="OS07G0661900 PROTEIN"/>
    <property type="match status" value="1"/>
</dbReference>
<dbReference type="PANTHER" id="PTHR46862:SF3">
    <property type="entry name" value="OS07G0661900 PROTEIN"/>
    <property type="match status" value="1"/>
</dbReference>
<dbReference type="Pfam" id="PF01535">
    <property type="entry name" value="PPR"/>
    <property type="match status" value="1"/>
</dbReference>
<dbReference type="Pfam" id="PF13041">
    <property type="entry name" value="PPR_2"/>
    <property type="match status" value="1"/>
</dbReference>
<dbReference type="PROSITE" id="PS51375">
    <property type="entry name" value="PPR"/>
    <property type="match status" value="3"/>
</dbReference>
<accession>Q6BZ28</accession>
<comment type="function">
    <text evidence="1">Regulates mitochondrial small subunit maturation by controlling 15S rRNA 5'-end processing. Localizes to the 5' precursor of the 15S rRNA in a position that is subsequently occupied by mS47 in the mature yeast mtSSU. Uses structure and sequence-specific RNA recognition, binding to a single-stranded region of the precursor and specifically recognizing bases -6 to -1. The exchange of Ccm1 for mS47 is coupled to the irreversible removal of precursor rRNA that is accompanied by conformational changes of the mitoribosomal proteins uS5m and mS26. These conformational changes signal completion of 5'-end rRNA processing through protection of the mature 5'-end of the 15S rRNA and stabilization of mS47. The removal of the 5' precursor together with the dissociation of Ccm1 may be catalyzed by the 5'-3' exoribonuclease Pet127. Involved in the specific removal of group I introns in mitochondrial encoded transcripts.</text>
</comment>
<comment type="subunit">
    <text evidence="1">Binds to mitochondrial small subunit 15S rRNA.</text>
</comment>
<comment type="subcellular location">
    <subcellularLocation>
        <location evidence="1">Mitochondrion</location>
    </subcellularLocation>
</comment>
<comment type="miscellaneous">
    <text evidence="1">Involved in mitochondrial-nuclear incompatibility, a major determinant in reproductive isolation between species, through hybrid incompatibility of Ccm1 and its interacting partner 15S rRNA between yeast species.</text>
</comment>
<comment type="similarity">
    <text evidence="5">Belongs to the CCM1 family.</text>
</comment>
<gene>
    <name type="primary">CCM1</name>
    <name type="ordered locus">DEHA2A05060g</name>
</gene>
<evidence type="ECO:0000250" key="1">
    <source>
        <dbReference type="UniProtKB" id="P48237"/>
    </source>
</evidence>
<evidence type="ECO:0000255" key="2"/>
<evidence type="ECO:0000255" key="3">
    <source>
        <dbReference type="PROSITE-ProRule" id="PRU00708"/>
    </source>
</evidence>
<evidence type="ECO:0000256" key="4">
    <source>
        <dbReference type="SAM" id="MobiDB-lite"/>
    </source>
</evidence>
<evidence type="ECO:0000305" key="5"/>
<name>CCM1_DEBHA</name>
<organism>
    <name type="scientific">Debaryomyces hansenii (strain ATCC 36239 / CBS 767 / BCRC 21394 / JCM 1990 / NBRC 0083 / IGC 2968)</name>
    <name type="common">Yeast</name>
    <name type="synonym">Torulaspora hansenii</name>
    <dbReference type="NCBI Taxonomy" id="284592"/>
    <lineage>
        <taxon>Eukaryota</taxon>
        <taxon>Fungi</taxon>
        <taxon>Dikarya</taxon>
        <taxon>Ascomycota</taxon>
        <taxon>Saccharomycotina</taxon>
        <taxon>Pichiomycetes</taxon>
        <taxon>Debaryomycetaceae</taxon>
        <taxon>Debaryomyces</taxon>
    </lineage>
</organism>